<gene>
    <name type="primary">nlp-36</name>
    <name type="ORF">B0464.3</name>
</gene>
<sequence length="82" mass="9427">MSVDLKQQLELADYLGALAVWCIFFGVLFILSVIFNFVCIKKDDDVTALERWGYKKNIDMKLGPHRRSMVARQIPQTVVADH</sequence>
<name>NLP36_CAEEL</name>
<reference key="1">
    <citation type="journal article" date="1994" name="Nature">
        <title>2.2 Mb of contiguous nucleotide sequence from chromosome III of C. elegans.</title>
        <authorList>
            <person name="Wilson R."/>
            <person name="Ainscough R."/>
            <person name="Anderson K."/>
            <person name="Baynes C."/>
            <person name="Berks M."/>
            <person name="Bonfield J."/>
            <person name="Burton J."/>
            <person name="Connell M."/>
            <person name="Copsey T."/>
            <person name="Cooper J."/>
            <person name="Coulson A."/>
            <person name="Craxton M."/>
            <person name="Dear S."/>
            <person name="Du Z."/>
            <person name="Durbin R."/>
            <person name="Favello A."/>
            <person name="Fraser A."/>
            <person name="Fulton L."/>
            <person name="Gardner A."/>
            <person name="Green P."/>
            <person name="Hawkins T."/>
            <person name="Hillier L."/>
            <person name="Jier M."/>
            <person name="Johnston L."/>
            <person name="Jones M."/>
            <person name="Kershaw J."/>
            <person name="Kirsten J."/>
            <person name="Laisster N."/>
            <person name="Latreille P."/>
            <person name="Lightning J."/>
            <person name="Lloyd C."/>
            <person name="Mortimore B."/>
            <person name="O'Callaghan M."/>
            <person name="Parsons J."/>
            <person name="Percy C."/>
            <person name="Rifken L."/>
            <person name="Roopra A."/>
            <person name="Saunders D."/>
            <person name="Shownkeen R."/>
            <person name="Sims M."/>
            <person name="Smaldon N."/>
            <person name="Smith A."/>
            <person name="Smith M."/>
            <person name="Sonnhammer E."/>
            <person name="Staden R."/>
            <person name="Sulston J."/>
            <person name="Thierry-Mieg J."/>
            <person name="Thomas K."/>
            <person name="Vaudin M."/>
            <person name="Vaughan K."/>
            <person name="Waterston R."/>
            <person name="Watson A."/>
            <person name="Weinstock L."/>
            <person name="Wilkinson-Sproat J."/>
            <person name="Wohldman P."/>
        </authorList>
    </citation>
    <scope>NUCLEOTIDE SEQUENCE [LARGE SCALE GENOMIC DNA]</scope>
    <source>
        <strain>Bristol N2</strain>
    </source>
</reference>
<reference key="2">
    <citation type="journal article" date="1998" name="Science">
        <title>Genome sequence of the nematode C. elegans: a platform for investigating biology.</title>
        <authorList>
            <consortium name="The C. elegans sequencing consortium"/>
        </authorList>
    </citation>
    <scope>NUCLEOTIDE SEQUENCE [LARGE SCALE GENOMIC DNA]</scope>
    <source>
        <strain>Bristol N2</strain>
    </source>
</reference>
<reference key="3">
    <citation type="journal article" date="2005" name="Biochem. Biophys. Res. Commun.">
        <title>Discovering neuropeptides in Caenorhabditis elegans by two dimensional liquid chromatography and mass spectrometry.</title>
        <authorList>
            <person name="Husson S.J."/>
            <person name="Clynen E."/>
            <person name="Baggerman G."/>
            <person name="De Loof A."/>
            <person name="Schoofs L."/>
        </authorList>
    </citation>
    <scope>PROTEIN SEQUENCE OF 68-82</scope>
</reference>
<organism>
    <name type="scientific">Caenorhabditis elegans</name>
    <dbReference type="NCBI Taxonomy" id="6239"/>
    <lineage>
        <taxon>Eukaryota</taxon>
        <taxon>Metazoa</taxon>
        <taxon>Ecdysozoa</taxon>
        <taxon>Nematoda</taxon>
        <taxon>Chromadorea</taxon>
        <taxon>Rhabditida</taxon>
        <taxon>Rhabditina</taxon>
        <taxon>Rhabditomorpha</taxon>
        <taxon>Rhabditoidea</taxon>
        <taxon>Rhabditidae</taxon>
        <taxon>Peloderinae</taxon>
        <taxon>Caenorhabditis</taxon>
    </lineage>
</organism>
<proteinExistence type="evidence at protein level"/>
<dbReference type="EMBL" id="Z19152">
    <property type="protein sequence ID" value="CAA79537.1"/>
    <property type="molecule type" value="Genomic_DNA"/>
</dbReference>
<dbReference type="PIR" id="S28280">
    <property type="entry name" value="S28280"/>
</dbReference>
<dbReference type="RefSeq" id="NP_499088.1">
    <property type="nucleotide sequence ID" value="NM_066687.6"/>
</dbReference>
<dbReference type="SMR" id="Q03561"/>
<dbReference type="FunCoup" id="Q03561">
    <property type="interactions" value="65"/>
</dbReference>
<dbReference type="STRING" id="6239.B0464.3.1"/>
<dbReference type="PaxDb" id="6239-B0464.3.2"/>
<dbReference type="PeptideAtlas" id="Q03561"/>
<dbReference type="EnsemblMetazoa" id="B0464.3.1">
    <property type="protein sequence ID" value="B0464.3.1"/>
    <property type="gene ID" value="WBGene00007185"/>
</dbReference>
<dbReference type="GeneID" id="176333"/>
<dbReference type="KEGG" id="cel:CELE_B0464.3"/>
<dbReference type="UCSC" id="B0464.3.1">
    <property type="organism name" value="c. elegans"/>
</dbReference>
<dbReference type="AGR" id="WB:WBGene00007185"/>
<dbReference type="CTD" id="176333"/>
<dbReference type="WormBase" id="B0464.3">
    <property type="protein sequence ID" value="CE00017"/>
    <property type="gene ID" value="WBGene00007185"/>
    <property type="gene designation" value="nlp-36"/>
</dbReference>
<dbReference type="eggNOG" id="ENOG502TIBZ">
    <property type="taxonomic scope" value="Eukaryota"/>
</dbReference>
<dbReference type="GeneTree" id="ENSGT00970000196341"/>
<dbReference type="HOGENOM" id="CLU_183251_0_0_1"/>
<dbReference type="InParanoid" id="Q03561"/>
<dbReference type="OMA" id="HRRSMVA"/>
<dbReference type="OrthoDB" id="5786091at2759"/>
<dbReference type="PhylomeDB" id="Q03561"/>
<dbReference type="PRO" id="PR:Q03561"/>
<dbReference type="Proteomes" id="UP000001940">
    <property type="component" value="Chromosome III"/>
</dbReference>
<dbReference type="Bgee" id="WBGene00007185">
    <property type="expression patterns" value="Expressed in larva and 4 other cell types or tissues"/>
</dbReference>
<dbReference type="Pfam" id="PF21525">
    <property type="entry name" value="Nlp36"/>
    <property type="match status" value="1"/>
</dbReference>
<feature type="signal peptide" evidence="1">
    <location>
        <begin position="1"/>
        <end status="unknown"/>
    </location>
</feature>
<feature type="propeptide" id="PRO_0000253592">
    <location>
        <begin status="unknown"/>
        <end position="65"/>
    </location>
</feature>
<feature type="peptide" id="PRO_0000065083" description="Neuropeptide-like peptide 36">
    <location>
        <begin position="68"/>
        <end position="82"/>
    </location>
</feature>
<accession>Q03561</accession>
<protein>
    <recommendedName>
        <fullName>Neuropeptide-like peptide 36</fullName>
    </recommendedName>
</protein>
<keyword id="KW-0165">Cleavage on pair of basic residues</keyword>
<keyword id="KW-0903">Direct protein sequencing</keyword>
<keyword id="KW-1185">Reference proteome</keyword>
<keyword id="KW-0732">Signal</keyword>
<evidence type="ECO:0000255" key="1"/>